<gene>
    <name type="primary">omh6</name>
    <name type="ORF">SPAC959.04c</name>
</gene>
<proteinExistence type="inferred from homology"/>
<feature type="chain" id="PRO_0000316588" description="O-glycoside alpha-1,2-mannosyltransferase homolog 6">
    <location>
        <begin position="1"/>
        <end position="298"/>
    </location>
</feature>
<feature type="active site" description="Nucleophile" evidence="2">
    <location>
        <position position="220"/>
    </location>
</feature>
<dbReference type="EC" id="2.4.1.-"/>
<dbReference type="EMBL" id="CU329670">
    <property type="protein sequence ID" value="CAB93011.1"/>
    <property type="molecule type" value="Genomic_DNA"/>
</dbReference>
<dbReference type="RefSeq" id="NP_594171.1">
    <property type="nucleotide sequence ID" value="NM_001019596.2"/>
</dbReference>
<dbReference type="SMR" id="Q9P4X2"/>
<dbReference type="BioGRID" id="279892">
    <property type="interactions" value="59"/>
</dbReference>
<dbReference type="FunCoup" id="Q9P4X2">
    <property type="interactions" value="120"/>
</dbReference>
<dbReference type="STRING" id="284812.Q9P4X2"/>
<dbReference type="CAZy" id="GT15">
    <property type="family name" value="Glycosyltransferase Family 15"/>
</dbReference>
<dbReference type="iPTMnet" id="Q9P4X2"/>
<dbReference type="PaxDb" id="4896-SPAC959.04c.1"/>
<dbReference type="EnsemblFungi" id="SPAC959.04c.1">
    <property type="protein sequence ID" value="SPAC959.04c.1:pep"/>
    <property type="gene ID" value="SPAC959.04c"/>
</dbReference>
<dbReference type="GeneID" id="2543472"/>
<dbReference type="KEGG" id="spo:2543472"/>
<dbReference type="PomBase" id="SPAC959.04c">
    <property type="gene designation" value="omh6"/>
</dbReference>
<dbReference type="VEuPathDB" id="FungiDB:SPAC959.04c"/>
<dbReference type="eggNOG" id="KOG4472">
    <property type="taxonomic scope" value="Eukaryota"/>
</dbReference>
<dbReference type="HOGENOM" id="CLU_855703_0_0_1"/>
<dbReference type="InParanoid" id="Q9P4X2"/>
<dbReference type="OMA" id="YHRWTES"/>
<dbReference type="PhylomeDB" id="Q9P4X2"/>
<dbReference type="PRO" id="PR:Q9P4X2"/>
<dbReference type="Proteomes" id="UP000002485">
    <property type="component" value="Chromosome I"/>
</dbReference>
<dbReference type="GO" id="GO:0005737">
    <property type="term" value="C:cytoplasm"/>
    <property type="evidence" value="ECO:0007005"/>
    <property type="project" value="PomBase"/>
</dbReference>
<dbReference type="GO" id="GO:0005794">
    <property type="term" value="C:Golgi apparatus"/>
    <property type="evidence" value="ECO:0000318"/>
    <property type="project" value="GO_Central"/>
</dbReference>
<dbReference type="GO" id="GO:0016020">
    <property type="term" value="C:membrane"/>
    <property type="evidence" value="ECO:0007669"/>
    <property type="project" value="InterPro"/>
</dbReference>
<dbReference type="GO" id="GO:0005634">
    <property type="term" value="C:nucleus"/>
    <property type="evidence" value="ECO:0007669"/>
    <property type="project" value="UniProtKB-SubCell"/>
</dbReference>
<dbReference type="GO" id="GO:0000026">
    <property type="term" value="F:alpha-1,2-mannosyltransferase activity"/>
    <property type="evidence" value="ECO:0000318"/>
    <property type="project" value="GO_Central"/>
</dbReference>
<dbReference type="GO" id="GO:0000032">
    <property type="term" value="P:cell wall mannoprotein biosynthetic process"/>
    <property type="evidence" value="ECO:0000318"/>
    <property type="project" value="GO_Central"/>
</dbReference>
<dbReference type="GO" id="GO:0006487">
    <property type="term" value="P:protein N-linked glycosylation"/>
    <property type="evidence" value="ECO:0000318"/>
    <property type="project" value="GO_Central"/>
</dbReference>
<dbReference type="GO" id="GO:0006493">
    <property type="term" value="P:protein O-linked glycosylation"/>
    <property type="evidence" value="ECO:0000318"/>
    <property type="project" value="GO_Central"/>
</dbReference>
<dbReference type="Gene3D" id="3.90.550.10">
    <property type="entry name" value="Spore Coat Polysaccharide Biosynthesis Protein SpsA, Chain A"/>
    <property type="match status" value="1"/>
</dbReference>
<dbReference type="InterPro" id="IPR002685">
    <property type="entry name" value="Glyco_trans_15"/>
</dbReference>
<dbReference type="InterPro" id="IPR029044">
    <property type="entry name" value="Nucleotide-diphossugar_trans"/>
</dbReference>
<dbReference type="PANTHER" id="PTHR31121">
    <property type="entry name" value="ALPHA-1,2 MANNOSYLTRANSFERASE KTR1"/>
    <property type="match status" value="1"/>
</dbReference>
<dbReference type="PANTHER" id="PTHR31121:SF14">
    <property type="entry name" value="O-GLYCOSIDE ALPHA-1,2-MANNOSYLTRANSFERASE HOMOLOG 6"/>
    <property type="match status" value="1"/>
</dbReference>
<dbReference type="Pfam" id="PF01793">
    <property type="entry name" value="Glyco_transf_15"/>
    <property type="match status" value="1"/>
</dbReference>
<dbReference type="SUPFAM" id="SSF53448">
    <property type="entry name" value="Nucleotide-diphospho-sugar transferases"/>
    <property type="match status" value="1"/>
</dbReference>
<accession>Q9P4X2</accession>
<protein>
    <recommendedName>
        <fullName>O-glycoside alpha-1,2-mannosyltransferase homolog 6</fullName>
        <ecNumber>2.4.1.-</ecNumber>
    </recommendedName>
</protein>
<keyword id="KW-0963">Cytoplasm</keyword>
<keyword id="KW-0328">Glycosyltransferase</keyword>
<keyword id="KW-0539">Nucleus</keyword>
<keyword id="KW-1185">Reference proteome</keyword>
<keyword id="KW-0808">Transferase</keyword>
<evidence type="ECO:0000250" key="1"/>
<evidence type="ECO:0000255" key="2"/>
<evidence type="ECO:0000269" key="3">
    <source>
    </source>
</evidence>
<evidence type="ECO:0000305" key="4"/>
<comment type="function">
    <text evidence="1">Probable mannosyltransferase involved in O-glycosylation of cell wall and secreted proteins.</text>
</comment>
<comment type="subcellular location">
    <subcellularLocation>
        <location evidence="3">Cytoplasm</location>
    </subcellularLocation>
    <subcellularLocation>
        <location evidence="3">Nucleus</location>
    </subcellularLocation>
</comment>
<comment type="similarity">
    <text evidence="4">Belongs to the glycosyltransferase 15 family.</text>
</comment>
<sequence>MYFLILFSSNAELGEVLRTMRSVEDRFNKRFHYPWTFYGMDEFTEYFMSTTSTIASGHCEYGTKGITYTNHLQFILTISYLVHWDLSQVKPLVENNRLYQQRADALAQENLSYVYSPLFHSFQDWVVRSLLYHPQLEYDYVWRIEPGLKLVCEEKKDIFSTFKDSDIVFTNHVCERKHSGIYAMEEAIEEYKILNTQGDFSNIWVYSNNYTYCKYWPFNEILSLKQIRHNQTYTNLINYLLGSGGTYYHRWTESDILSAAFGVLRARANHMESVGFFLNDDVHYCPETIPYTGRCACL</sequence>
<name>OMH6_SCHPO</name>
<reference key="1">
    <citation type="journal article" date="2002" name="Nature">
        <title>The genome sequence of Schizosaccharomyces pombe.</title>
        <authorList>
            <person name="Wood V."/>
            <person name="Gwilliam R."/>
            <person name="Rajandream M.A."/>
            <person name="Lyne M.H."/>
            <person name="Lyne R."/>
            <person name="Stewart A."/>
            <person name="Sgouros J.G."/>
            <person name="Peat N."/>
            <person name="Hayles J."/>
            <person name="Baker S.G."/>
            <person name="Basham D."/>
            <person name="Bowman S."/>
            <person name="Brooks K."/>
            <person name="Brown D."/>
            <person name="Brown S."/>
            <person name="Chillingworth T."/>
            <person name="Churcher C.M."/>
            <person name="Collins M."/>
            <person name="Connor R."/>
            <person name="Cronin A."/>
            <person name="Davis P."/>
            <person name="Feltwell T."/>
            <person name="Fraser A."/>
            <person name="Gentles S."/>
            <person name="Goble A."/>
            <person name="Hamlin N."/>
            <person name="Harris D.E."/>
            <person name="Hidalgo J."/>
            <person name="Hodgson G."/>
            <person name="Holroyd S."/>
            <person name="Hornsby T."/>
            <person name="Howarth S."/>
            <person name="Huckle E.J."/>
            <person name="Hunt S."/>
            <person name="Jagels K."/>
            <person name="James K.D."/>
            <person name="Jones L."/>
            <person name="Jones M."/>
            <person name="Leather S."/>
            <person name="McDonald S."/>
            <person name="McLean J."/>
            <person name="Mooney P."/>
            <person name="Moule S."/>
            <person name="Mungall K.L."/>
            <person name="Murphy L.D."/>
            <person name="Niblett D."/>
            <person name="Odell C."/>
            <person name="Oliver K."/>
            <person name="O'Neil S."/>
            <person name="Pearson D."/>
            <person name="Quail M.A."/>
            <person name="Rabbinowitsch E."/>
            <person name="Rutherford K.M."/>
            <person name="Rutter S."/>
            <person name="Saunders D."/>
            <person name="Seeger K."/>
            <person name="Sharp S."/>
            <person name="Skelton J."/>
            <person name="Simmonds M.N."/>
            <person name="Squares R."/>
            <person name="Squares S."/>
            <person name="Stevens K."/>
            <person name="Taylor K."/>
            <person name="Taylor R.G."/>
            <person name="Tivey A."/>
            <person name="Walsh S.V."/>
            <person name="Warren T."/>
            <person name="Whitehead S."/>
            <person name="Woodward J.R."/>
            <person name="Volckaert G."/>
            <person name="Aert R."/>
            <person name="Robben J."/>
            <person name="Grymonprez B."/>
            <person name="Weltjens I."/>
            <person name="Vanstreels E."/>
            <person name="Rieger M."/>
            <person name="Schaefer M."/>
            <person name="Mueller-Auer S."/>
            <person name="Gabel C."/>
            <person name="Fuchs M."/>
            <person name="Duesterhoeft A."/>
            <person name="Fritzc C."/>
            <person name="Holzer E."/>
            <person name="Moestl D."/>
            <person name="Hilbert H."/>
            <person name="Borzym K."/>
            <person name="Langer I."/>
            <person name="Beck A."/>
            <person name="Lehrach H."/>
            <person name="Reinhardt R."/>
            <person name="Pohl T.M."/>
            <person name="Eger P."/>
            <person name="Zimmermann W."/>
            <person name="Wedler H."/>
            <person name="Wambutt R."/>
            <person name="Purnelle B."/>
            <person name="Goffeau A."/>
            <person name="Cadieu E."/>
            <person name="Dreano S."/>
            <person name="Gloux S."/>
            <person name="Lelaure V."/>
            <person name="Mottier S."/>
            <person name="Galibert F."/>
            <person name="Aves S.J."/>
            <person name="Xiang Z."/>
            <person name="Hunt C."/>
            <person name="Moore K."/>
            <person name="Hurst S.M."/>
            <person name="Lucas M."/>
            <person name="Rochet M."/>
            <person name="Gaillardin C."/>
            <person name="Tallada V.A."/>
            <person name="Garzon A."/>
            <person name="Thode G."/>
            <person name="Daga R.R."/>
            <person name="Cruzado L."/>
            <person name="Jimenez J."/>
            <person name="Sanchez M."/>
            <person name="del Rey F."/>
            <person name="Benito J."/>
            <person name="Dominguez A."/>
            <person name="Revuelta J.L."/>
            <person name="Moreno S."/>
            <person name="Armstrong J."/>
            <person name="Forsburg S.L."/>
            <person name="Cerutti L."/>
            <person name="Lowe T."/>
            <person name="McCombie W.R."/>
            <person name="Paulsen I."/>
            <person name="Potashkin J."/>
            <person name="Shpakovski G.V."/>
            <person name="Ussery D."/>
            <person name="Barrell B.G."/>
            <person name="Nurse P."/>
        </authorList>
    </citation>
    <scope>NUCLEOTIDE SEQUENCE [LARGE SCALE GENOMIC DNA]</scope>
    <source>
        <strain>972 / ATCC 24843</strain>
    </source>
</reference>
<reference key="2">
    <citation type="journal article" date="2006" name="Nat. Biotechnol.">
        <title>ORFeome cloning and global analysis of protein localization in the fission yeast Schizosaccharomyces pombe.</title>
        <authorList>
            <person name="Matsuyama A."/>
            <person name="Arai R."/>
            <person name="Yashiroda Y."/>
            <person name="Shirai A."/>
            <person name="Kamata A."/>
            <person name="Sekido S."/>
            <person name="Kobayashi Y."/>
            <person name="Hashimoto A."/>
            <person name="Hamamoto M."/>
            <person name="Hiraoka Y."/>
            <person name="Horinouchi S."/>
            <person name="Yoshida M."/>
        </authorList>
    </citation>
    <scope>SUBCELLULAR LOCATION [LARGE SCALE ANALYSIS]</scope>
</reference>
<reference key="3">
    <citation type="journal article" date="2009" name="FEMS Yeast Res.">
        <title>Identification and characterization of a gene required for alpha1,2-mannose extension in the O-linked glycan synthesis pathway in Schizosaccharomyces pombe.</title>
        <authorList>
            <person name="Ikeda Y."/>
            <person name="Ohashi T."/>
            <person name="Tanaka N."/>
            <person name="Takegawa K."/>
        </authorList>
    </citation>
    <scope>IDENTIFICATION</scope>
</reference>
<organism>
    <name type="scientific">Schizosaccharomyces pombe (strain 972 / ATCC 24843)</name>
    <name type="common">Fission yeast</name>
    <dbReference type="NCBI Taxonomy" id="284812"/>
    <lineage>
        <taxon>Eukaryota</taxon>
        <taxon>Fungi</taxon>
        <taxon>Dikarya</taxon>
        <taxon>Ascomycota</taxon>
        <taxon>Taphrinomycotina</taxon>
        <taxon>Schizosaccharomycetes</taxon>
        <taxon>Schizosaccharomycetales</taxon>
        <taxon>Schizosaccharomycetaceae</taxon>
        <taxon>Schizosaccharomyces</taxon>
    </lineage>
</organism>